<comment type="function">
    <text evidence="2">May play a synaptic role at the postsynaptic lipid rafts possibly through interaction with CAMK2A.</text>
</comment>
<comment type="subunit">
    <text evidence="2">Interacts with CAMK2A.</text>
</comment>
<comment type="interaction">
    <interactant intactId="EBI-13079214">
        <id>Q8WXS3-2</id>
    </interactant>
    <interactant intactId="EBI-747693">
        <id>P41227</id>
        <label>NAA10</label>
    </interactant>
    <organismsDiffer>false</organismsDiffer>
    <experiments>5</experiments>
</comment>
<comment type="interaction">
    <interactant intactId="EBI-13079214">
        <id>Q8WXS3-2</id>
    </interactant>
    <interactant intactId="EBI-2585120">
        <id>Q9BSU3</id>
        <label>NAA11</label>
    </interactant>
    <organismsDiffer>false</organismsDiffer>
    <experiments>3</experiments>
</comment>
<comment type="subcellular location">
    <subcellularLocation>
        <location evidence="4">Cytoplasm</location>
    </subcellularLocation>
    <subcellularLocation>
        <location evidence="2">Synapse</location>
        <location evidence="2">Synaptosome</location>
    </subcellularLocation>
    <subcellularLocation>
        <location evidence="2">Membrane raft</location>
    </subcellularLocation>
    <subcellularLocation>
        <location evidence="2">Postsynaptic density</location>
    </subcellularLocation>
    <text evidence="1 2">In neurons, localizes to postsynaptic lipid rafts (By similarity). In myocardial and skeletal muscle cells, localizes to the cytoplasm adjacent to the inner cell membrane, polarized to one end of the myocyte (By similarity).</text>
</comment>
<comment type="alternative products">
    <event type="alternative splicing"/>
    <isoform>
        <id>Q8WXS3-2</id>
        <name>1</name>
        <name evidence="5">1-6-8</name>
        <sequence type="displayed"/>
    </isoform>
    <isoform>
        <id>Q8WXS3-1</id>
        <name>2</name>
        <name evidence="5">1-5-6-8</name>
        <sequence type="described" ref="VSP_060712"/>
    </isoform>
    <isoform>
        <id>Q8WXS3-3</id>
        <name>3</name>
        <name evidence="5">1-5-6-7-8</name>
        <sequence type="described" ref="VSP_060712 VSP_060718 VSP_060719"/>
    </isoform>
    <isoform>
        <id>Q8WXS3-4</id>
        <name>4</name>
        <name evidence="5">1-2</name>
        <sequence type="described" ref="VSP_060713 VSP_060717"/>
    </isoform>
    <isoform>
        <id>Q8WXS3-5</id>
        <name>5</name>
        <name evidence="5">1-4-5-6-8</name>
        <sequence type="described" ref="VSP_060715 VSP_060716"/>
    </isoform>
    <isoform>
        <id>Q8WXS3-6</id>
        <name>6</name>
        <name evidence="5">1-8</name>
        <sequence type="described" ref="VSP_060714"/>
    </isoform>
</comment>
<comment type="tissue specificity">
    <text evidence="4">Predominantly expressed in neuroectoderm-derived tissues. Expressed in the brain and spinal cord, and at low levels, in the adrenal gland. In the bone marrow, confined to the CD34+ progenitor cells. Not found in peripheral blood mononuclear cells, nor lymph nodes. Tends to be expressed at high levels in acute myeloid leukemia and glioblastoma cells.</text>
</comment>
<comment type="PTM">
    <text evidence="2">Palmitoylation and myristoylation target the protein to the lipid rafts.</text>
</comment>
<comment type="online information" name="Atlas of Genetics and Cytogenetics in Oncology and Haematology">
    <link uri="https://atlasgeneticsoncology.org/gene/739/BAALC"/>
</comment>
<accession>Q8WXS3</accession>
<accession>Q8WTP6</accession>
<accession>Q8WXS0</accession>
<accession>Q8WXS1</accession>
<accession>Q8WXS2</accession>
<accession>Q9HA93</accession>
<sequence>MGCGGSRADAIEPRYYESWTRETESTWLTYTDSDAPPSAAAPDSGPEAGGLHSGMLEDGLPSNGVPRSTAPGGIPNPEKKTNCETQCPNPQSLSSGPLTQKQNGLQTTEAKRDAKRMPAKEVTINVTDSIQQMDRSRRITKNCVN</sequence>
<evidence type="ECO:0000250" key="1">
    <source>
        <dbReference type="UniProtKB" id="Q8VHV1"/>
    </source>
</evidence>
<evidence type="ECO:0000250" key="2">
    <source>
        <dbReference type="UniProtKB" id="Q920K5"/>
    </source>
</evidence>
<evidence type="ECO:0000256" key="3">
    <source>
        <dbReference type="SAM" id="MobiDB-lite"/>
    </source>
</evidence>
<evidence type="ECO:0000269" key="4">
    <source>
    </source>
</evidence>
<evidence type="ECO:0000303" key="5">
    <source>
    </source>
</evidence>
<evidence type="ECO:0000305" key="6">
    <source>
    </source>
</evidence>
<keyword id="KW-0025">Alternative splicing</keyword>
<keyword id="KW-0963">Cytoplasm</keyword>
<keyword id="KW-0449">Lipoprotein</keyword>
<keyword id="KW-0472">Membrane</keyword>
<keyword id="KW-0519">Myristate</keyword>
<keyword id="KW-0564">Palmitate</keyword>
<keyword id="KW-1267">Proteomics identification</keyword>
<keyword id="KW-1185">Reference proteome</keyword>
<keyword id="KW-0770">Synapse</keyword>
<keyword id="KW-0771">Synaptosome</keyword>
<proteinExistence type="evidence at protein level"/>
<feature type="initiator methionine" description="Removed" evidence="2">
    <location>
        <position position="1"/>
    </location>
</feature>
<feature type="chain" id="PRO_0000248205" description="Brain and acute leukemia cytoplasmic protein">
    <location>
        <begin position="2"/>
        <end position="145"/>
    </location>
</feature>
<feature type="region of interest" description="Interaction with CAMK2A" evidence="2">
    <location>
        <begin position="3"/>
        <end position="35"/>
    </location>
</feature>
<feature type="region of interest" description="Disordered" evidence="3">
    <location>
        <begin position="27"/>
        <end position="119"/>
    </location>
</feature>
<feature type="compositionally biased region" description="Low complexity" evidence="3">
    <location>
        <begin position="32"/>
        <end position="46"/>
    </location>
</feature>
<feature type="compositionally biased region" description="Polar residues" evidence="3">
    <location>
        <begin position="83"/>
        <end position="108"/>
    </location>
</feature>
<feature type="compositionally biased region" description="Basic and acidic residues" evidence="3">
    <location>
        <begin position="109"/>
        <end position="119"/>
    </location>
</feature>
<feature type="lipid moiety-binding region" description="N-myristoyl glycine" evidence="2">
    <location>
        <position position="2"/>
    </location>
</feature>
<feature type="lipid moiety-binding region" description="S-palmitoyl cysteine" evidence="2">
    <location>
        <position position="3"/>
    </location>
</feature>
<feature type="splice variant" id="VSP_060712" description="In isoform 2 and isoform 3." evidence="6">
    <original>S</original>
    <variation>SVLEAEKSKIKAPTDSVSDEGLFSASKMAPLAVFSH</variation>
    <location>
        <position position="53"/>
    </location>
</feature>
<feature type="splice variant" id="VSP_060713" description="In isoform 4." evidence="6">
    <original>GMLEDGLPSNGVPRSTAPGGIPNPEKK</original>
    <variation>AHYPLAFALAWRDNSLGALLVQEGLCR</variation>
    <location>
        <begin position="54"/>
        <end position="80"/>
    </location>
</feature>
<feature type="splice variant" id="VSP_060714" description="In isoform 6." evidence="6">
    <location>
        <begin position="55"/>
        <end position="145"/>
    </location>
</feature>
<feature type="splice variant" id="VSP_060715" description="In isoform 5." evidence="6">
    <original>MLEDGLPSNGVPRSTAPGG</original>
    <variation>CLEEHYHLTALQKVGHPNH</variation>
    <location>
        <begin position="55"/>
        <end position="73"/>
    </location>
</feature>
<feature type="splice variant" id="VSP_060716" description="In isoform 5." evidence="6">
    <location>
        <begin position="74"/>
        <end position="145"/>
    </location>
</feature>
<feature type="splice variant" id="VSP_060717" description="In isoform 4." evidence="6">
    <location>
        <begin position="81"/>
        <end position="145"/>
    </location>
</feature>
<feature type="splice variant" id="VSP_060718" description="In isoform 3." evidence="6">
    <original>AKRDA</original>
    <variation>VLLPS</variation>
    <location>
        <begin position="110"/>
        <end position="114"/>
    </location>
</feature>
<feature type="splice variant" id="VSP_060719" description="In isoform 3." evidence="6">
    <location>
        <begin position="115"/>
        <end position="145"/>
    </location>
</feature>
<feature type="sequence variant" id="VAR_056741" description="In dbSNP:rs34542607.">
    <original>S</original>
    <variation>T</variation>
    <location>
        <position position="129"/>
    </location>
</feature>
<protein>
    <recommendedName>
        <fullName evidence="5">Brain and acute leukemia cytoplasmic protein</fullName>
    </recommendedName>
</protein>
<reference key="1">
    <citation type="journal article" date="2001" name="Proc. Natl. Acad. Sci. U.S.A.">
        <title>BAALC, the human member of a novel mammalian neuroectoderm gene lineage, is implicated in hematopoiesis and acute leukemia.</title>
        <authorList>
            <person name="Tanner S.M."/>
            <person name="Austin J.L."/>
            <person name="Leone G."/>
            <person name="Rush L.J."/>
            <person name="Plass C."/>
            <person name="Heinonen K."/>
            <person name="Mrozek K."/>
            <person name="Sill H."/>
            <person name="Knuutila S."/>
            <person name="Kolitz J.E."/>
            <person name="Archer K.J."/>
            <person name="Caligiuri M.A."/>
            <person name="Bloomfield C.D."/>
            <person name="de La Chapelle A."/>
        </authorList>
    </citation>
    <scope>NUCLEOTIDE SEQUENCE [GENOMIC DNA / MRNA] (ISOFORMS 1; 2; 3; 4; 5 AND 6)</scope>
    <scope>TISSUE SPECIFICITY</scope>
</reference>
<reference key="2">
    <citation type="journal article" date="2004" name="Nat. Genet.">
        <title>Complete sequencing and characterization of 21,243 full-length human cDNAs.</title>
        <authorList>
            <person name="Ota T."/>
            <person name="Suzuki Y."/>
            <person name="Nishikawa T."/>
            <person name="Otsuki T."/>
            <person name="Sugiyama T."/>
            <person name="Irie R."/>
            <person name="Wakamatsu A."/>
            <person name="Hayashi K."/>
            <person name="Sato H."/>
            <person name="Nagai K."/>
            <person name="Kimura K."/>
            <person name="Makita H."/>
            <person name="Sekine M."/>
            <person name="Obayashi M."/>
            <person name="Nishi T."/>
            <person name="Shibahara T."/>
            <person name="Tanaka T."/>
            <person name="Ishii S."/>
            <person name="Yamamoto J."/>
            <person name="Saito K."/>
            <person name="Kawai Y."/>
            <person name="Isono Y."/>
            <person name="Nakamura Y."/>
            <person name="Nagahari K."/>
            <person name="Murakami K."/>
            <person name="Yasuda T."/>
            <person name="Iwayanagi T."/>
            <person name="Wagatsuma M."/>
            <person name="Shiratori A."/>
            <person name="Sudo H."/>
            <person name="Hosoiri T."/>
            <person name="Kaku Y."/>
            <person name="Kodaira H."/>
            <person name="Kondo H."/>
            <person name="Sugawara M."/>
            <person name="Takahashi M."/>
            <person name="Kanda K."/>
            <person name="Yokoi T."/>
            <person name="Furuya T."/>
            <person name="Kikkawa E."/>
            <person name="Omura Y."/>
            <person name="Abe K."/>
            <person name="Kamihara K."/>
            <person name="Katsuta N."/>
            <person name="Sato K."/>
            <person name="Tanikawa M."/>
            <person name="Yamazaki M."/>
            <person name="Ninomiya K."/>
            <person name="Ishibashi T."/>
            <person name="Yamashita H."/>
            <person name="Murakawa K."/>
            <person name="Fujimori K."/>
            <person name="Tanai H."/>
            <person name="Kimata M."/>
            <person name="Watanabe M."/>
            <person name="Hiraoka S."/>
            <person name="Chiba Y."/>
            <person name="Ishida S."/>
            <person name="Ono Y."/>
            <person name="Takiguchi S."/>
            <person name="Watanabe S."/>
            <person name="Yosida M."/>
            <person name="Hotuta T."/>
            <person name="Kusano J."/>
            <person name="Kanehori K."/>
            <person name="Takahashi-Fujii A."/>
            <person name="Hara H."/>
            <person name="Tanase T.-O."/>
            <person name="Nomura Y."/>
            <person name="Togiya S."/>
            <person name="Komai F."/>
            <person name="Hara R."/>
            <person name="Takeuchi K."/>
            <person name="Arita M."/>
            <person name="Imose N."/>
            <person name="Musashino K."/>
            <person name="Yuuki H."/>
            <person name="Oshima A."/>
            <person name="Sasaki N."/>
            <person name="Aotsuka S."/>
            <person name="Yoshikawa Y."/>
            <person name="Matsunawa H."/>
            <person name="Ichihara T."/>
            <person name="Shiohata N."/>
            <person name="Sano S."/>
            <person name="Moriya S."/>
            <person name="Momiyama H."/>
            <person name="Satoh N."/>
            <person name="Takami S."/>
            <person name="Terashima Y."/>
            <person name="Suzuki O."/>
            <person name="Nakagawa S."/>
            <person name="Senoh A."/>
            <person name="Mizoguchi H."/>
            <person name="Goto Y."/>
            <person name="Shimizu F."/>
            <person name="Wakebe H."/>
            <person name="Hishigaki H."/>
            <person name="Watanabe T."/>
            <person name="Sugiyama A."/>
            <person name="Takemoto M."/>
            <person name="Kawakami B."/>
            <person name="Yamazaki M."/>
            <person name="Watanabe K."/>
            <person name="Kumagai A."/>
            <person name="Itakura S."/>
            <person name="Fukuzumi Y."/>
            <person name="Fujimori Y."/>
            <person name="Komiyama M."/>
            <person name="Tashiro H."/>
            <person name="Tanigami A."/>
            <person name="Fujiwara T."/>
            <person name="Ono T."/>
            <person name="Yamada K."/>
            <person name="Fujii Y."/>
            <person name="Ozaki K."/>
            <person name="Hirao M."/>
            <person name="Ohmori Y."/>
            <person name="Kawabata A."/>
            <person name="Hikiji T."/>
            <person name="Kobatake N."/>
            <person name="Inagaki H."/>
            <person name="Ikema Y."/>
            <person name="Okamoto S."/>
            <person name="Okitani R."/>
            <person name="Kawakami T."/>
            <person name="Noguchi S."/>
            <person name="Itoh T."/>
            <person name="Shigeta K."/>
            <person name="Senba T."/>
            <person name="Matsumura K."/>
            <person name="Nakajima Y."/>
            <person name="Mizuno T."/>
            <person name="Morinaga M."/>
            <person name="Sasaki M."/>
            <person name="Togashi T."/>
            <person name="Oyama M."/>
            <person name="Hata H."/>
            <person name="Watanabe M."/>
            <person name="Komatsu T."/>
            <person name="Mizushima-Sugano J."/>
            <person name="Satoh T."/>
            <person name="Shirai Y."/>
            <person name="Takahashi Y."/>
            <person name="Nakagawa K."/>
            <person name="Okumura K."/>
            <person name="Nagase T."/>
            <person name="Nomura N."/>
            <person name="Kikuchi H."/>
            <person name="Masuho Y."/>
            <person name="Yamashita R."/>
            <person name="Nakai K."/>
            <person name="Yada T."/>
            <person name="Nakamura Y."/>
            <person name="Ohara O."/>
            <person name="Isogai T."/>
            <person name="Sugano S."/>
        </authorList>
    </citation>
    <scope>NUCLEOTIDE SEQUENCE [LARGE SCALE MRNA] (ISOFORM 1)</scope>
    <source>
        <tissue>Embryo</tissue>
    </source>
</reference>
<reference key="3">
    <citation type="journal article" date="2004" name="Genome Res.">
        <title>The status, quality, and expansion of the NIH full-length cDNA project: the Mammalian Gene Collection (MGC).</title>
        <authorList>
            <consortium name="The MGC Project Team"/>
        </authorList>
    </citation>
    <scope>NUCLEOTIDE SEQUENCE [LARGE SCALE MRNA] (ISOFORMS 1 AND 6)</scope>
    <source>
        <tissue>Brain</tissue>
    </source>
</reference>
<dbReference type="EMBL" id="AF371319">
    <property type="protein sequence ID" value="AAL50515.1"/>
    <property type="molecule type" value="mRNA"/>
</dbReference>
<dbReference type="EMBL" id="AF371323">
    <property type="protein sequence ID" value="AAL50519.1"/>
    <property type="molecule type" value="mRNA"/>
</dbReference>
<dbReference type="EMBL" id="AF363578">
    <property type="protein sequence ID" value="AAL50377.1"/>
    <property type="molecule type" value="Genomic_DNA"/>
</dbReference>
<dbReference type="EMBL" id="AF363578">
    <property type="protein sequence ID" value="AAL50378.1"/>
    <property type="molecule type" value="Genomic_DNA"/>
</dbReference>
<dbReference type="EMBL" id="AF363578">
    <property type="protein sequence ID" value="AAL50379.1"/>
    <property type="molecule type" value="Genomic_DNA"/>
</dbReference>
<dbReference type="EMBL" id="AF363578">
    <property type="protein sequence ID" value="AAL50380.1"/>
    <property type="molecule type" value="Genomic_DNA"/>
</dbReference>
<dbReference type="EMBL" id="AF363578">
    <property type="protein sequence ID" value="AAL50381.1"/>
    <property type="molecule type" value="Genomic_DNA"/>
</dbReference>
<dbReference type="EMBL" id="AF363578">
    <property type="protein sequence ID" value="AAL50382.1"/>
    <property type="molecule type" value="Genomic_DNA"/>
</dbReference>
<dbReference type="EMBL" id="AK022077">
    <property type="protein sequence ID" value="BAB13960.1"/>
    <property type="molecule type" value="mRNA"/>
</dbReference>
<dbReference type="EMBL" id="BC011517">
    <property type="protein sequence ID" value="AAH11517.1"/>
    <property type="molecule type" value="mRNA"/>
</dbReference>
<dbReference type="EMBL" id="BC035038">
    <property type="protein sequence ID" value="AAH35038.1"/>
    <property type="molecule type" value="mRNA"/>
</dbReference>
<dbReference type="CCDS" id="CCDS47906.1">
    <molecule id="Q8WXS3-6"/>
</dbReference>
<dbReference type="CCDS" id="CCDS6297.1">
    <molecule id="Q8WXS3-2"/>
</dbReference>
<dbReference type="CCDS" id="CCDS94326.1">
    <molecule id="Q8WXS3-1"/>
</dbReference>
<dbReference type="RefSeq" id="NP_001019543.1">
    <molecule id="Q8WXS3-6"/>
    <property type="nucleotide sequence ID" value="NM_001024372.2"/>
</dbReference>
<dbReference type="RefSeq" id="NP_001351803.1">
    <molecule id="Q8WXS3-1"/>
    <property type="nucleotide sequence ID" value="NM_001364874.1"/>
</dbReference>
<dbReference type="RefSeq" id="NP_079088.1">
    <molecule id="Q8WXS3-2"/>
    <property type="nucleotide sequence ID" value="NM_024812.3"/>
</dbReference>
<dbReference type="BioGRID" id="122958">
    <property type="interactions" value="15"/>
</dbReference>
<dbReference type="FunCoup" id="Q8WXS3">
    <property type="interactions" value="1054"/>
</dbReference>
<dbReference type="IntAct" id="Q8WXS3">
    <property type="interactions" value="6"/>
</dbReference>
<dbReference type="MINT" id="Q8WXS3"/>
<dbReference type="GlyGen" id="Q8WXS3">
    <property type="glycosylation" value="1 site, 1 O-linked glycan (1 site)"/>
</dbReference>
<dbReference type="iPTMnet" id="Q8WXS3"/>
<dbReference type="PhosphoSitePlus" id="Q8WXS3"/>
<dbReference type="BioMuta" id="BAALC"/>
<dbReference type="DMDM" id="74730996"/>
<dbReference type="MassIVE" id="Q8WXS3"/>
<dbReference type="PeptideAtlas" id="Q8WXS3"/>
<dbReference type="ProteomicsDB" id="75088">
    <molecule id="Q8WXS3-1"/>
</dbReference>
<dbReference type="ProteomicsDB" id="75089">
    <molecule id="Q8WXS3-2"/>
</dbReference>
<dbReference type="ProteomicsDB" id="75090">
    <molecule id="Q8WXS3-3"/>
</dbReference>
<dbReference type="ProteomicsDB" id="75091">
    <molecule id="Q8WXS3-4"/>
</dbReference>
<dbReference type="ProteomicsDB" id="75092">
    <molecule id="Q8WXS3-5"/>
</dbReference>
<dbReference type="ProteomicsDB" id="75093">
    <molecule id="Q8WXS3-6"/>
</dbReference>
<dbReference type="Antibodypedia" id="26359">
    <property type="antibodies" value="147 antibodies from 29 providers"/>
</dbReference>
<dbReference type="DNASU" id="79870"/>
<dbReference type="Ensembl" id="ENST00000297574.6">
    <molecule id="Q8WXS3-1"/>
    <property type="protein sequence ID" value="ENSP00000297574.6"/>
    <property type="gene ID" value="ENSG00000164929.17"/>
</dbReference>
<dbReference type="Ensembl" id="ENST00000306391.10">
    <molecule id="Q8WXS3-4"/>
    <property type="protein sequence ID" value="ENSP00000302559.6"/>
    <property type="gene ID" value="ENSG00000164929.17"/>
</dbReference>
<dbReference type="Ensembl" id="ENST00000309982.10">
    <molecule id="Q8WXS3-2"/>
    <property type="protein sequence ID" value="ENSP00000312457.5"/>
    <property type="gene ID" value="ENSG00000164929.17"/>
</dbReference>
<dbReference type="Ensembl" id="ENST00000330955.5">
    <molecule id="Q8WXS3-5"/>
    <property type="protein sequence ID" value="ENSP00000331579.5"/>
    <property type="gene ID" value="ENSG00000164929.17"/>
</dbReference>
<dbReference type="Ensembl" id="ENST00000438105.2">
    <molecule id="Q8WXS3-6"/>
    <property type="protein sequence ID" value="ENSP00000395024.2"/>
    <property type="gene ID" value="ENSG00000164929.17"/>
</dbReference>
<dbReference type="GeneID" id="79870"/>
<dbReference type="KEGG" id="hsa:79870"/>
<dbReference type="MANE-Select" id="ENST00000309982.10">
    <property type="protein sequence ID" value="ENSP00000312457.5"/>
    <property type="RefSeq nucleotide sequence ID" value="NM_024812.3"/>
    <property type="RefSeq protein sequence ID" value="NP_079088.1"/>
</dbReference>
<dbReference type="UCSC" id="uc003yld.4">
    <molecule id="Q8WXS3-2"/>
    <property type="organism name" value="human"/>
</dbReference>
<dbReference type="AGR" id="HGNC:14333"/>
<dbReference type="CTD" id="79870"/>
<dbReference type="DisGeNET" id="79870"/>
<dbReference type="GeneCards" id="BAALC"/>
<dbReference type="HGNC" id="HGNC:14333">
    <property type="gene designation" value="BAALC"/>
</dbReference>
<dbReference type="HPA" id="ENSG00000164929">
    <property type="expression patterns" value="Tissue enriched (brain)"/>
</dbReference>
<dbReference type="MalaCards" id="BAALC"/>
<dbReference type="MIM" id="606602">
    <property type="type" value="gene"/>
</dbReference>
<dbReference type="neXtProt" id="NX_Q8WXS3"/>
<dbReference type="OpenTargets" id="ENSG00000164929"/>
<dbReference type="PharmGKB" id="PA25230"/>
<dbReference type="VEuPathDB" id="HostDB:ENSG00000164929"/>
<dbReference type="GeneTree" id="ENSGT00390000013853"/>
<dbReference type="HOGENOM" id="CLU_135096_0_0_1"/>
<dbReference type="InParanoid" id="Q8WXS3"/>
<dbReference type="OMA" id="QNGFRTT"/>
<dbReference type="OrthoDB" id="9940597at2759"/>
<dbReference type="PAN-GO" id="Q8WXS3">
    <property type="GO annotations" value="1 GO annotation based on evolutionary models"/>
</dbReference>
<dbReference type="PhylomeDB" id="Q8WXS3"/>
<dbReference type="TreeFam" id="TF330767"/>
<dbReference type="PathwayCommons" id="Q8WXS3"/>
<dbReference type="SignaLink" id="Q8WXS3"/>
<dbReference type="SIGNOR" id="Q8WXS3"/>
<dbReference type="BioGRID-ORCS" id="79870">
    <property type="hits" value="7 hits in 1149 CRISPR screens"/>
</dbReference>
<dbReference type="ChiTaRS" id="BAALC">
    <property type="organism name" value="human"/>
</dbReference>
<dbReference type="GenomeRNAi" id="79870"/>
<dbReference type="Pharos" id="Q8WXS3">
    <property type="development level" value="Tbio"/>
</dbReference>
<dbReference type="PRO" id="PR:Q8WXS3"/>
<dbReference type="Proteomes" id="UP000005640">
    <property type="component" value="Chromosome 8"/>
</dbReference>
<dbReference type="RNAct" id="Q8WXS3">
    <property type="molecule type" value="protein"/>
</dbReference>
<dbReference type="Bgee" id="ENSG00000164929">
    <property type="expression patterns" value="Expressed in putamen and 138 other cell types or tissues"/>
</dbReference>
<dbReference type="GO" id="GO:0005737">
    <property type="term" value="C:cytoplasm"/>
    <property type="evidence" value="ECO:0000314"/>
    <property type="project" value="MGI"/>
</dbReference>
<dbReference type="GO" id="GO:0005829">
    <property type="term" value="C:cytosol"/>
    <property type="evidence" value="ECO:0000314"/>
    <property type="project" value="HPA"/>
</dbReference>
<dbReference type="GO" id="GO:0045121">
    <property type="term" value="C:membrane raft"/>
    <property type="evidence" value="ECO:0007669"/>
    <property type="project" value="UniProtKB-SubCell"/>
</dbReference>
<dbReference type="GO" id="GO:0043005">
    <property type="term" value="C:neuron projection"/>
    <property type="evidence" value="ECO:0007669"/>
    <property type="project" value="UniProtKB-KW"/>
</dbReference>
<dbReference type="GO" id="GO:0005654">
    <property type="term" value="C:nucleoplasm"/>
    <property type="evidence" value="ECO:0000314"/>
    <property type="project" value="HPA"/>
</dbReference>
<dbReference type="GO" id="GO:0014069">
    <property type="term" value="C:postsynaptic density"/>
    <property type="evidence" value="ECO:0007669"/>
    <property type="project" value="UniProtKB-SubCell"/>
</dbReference>
<dbReference type="GO" id="GO:0016528">
    <property type="term" value="C:sarcoplasm"/>
    <property type="evidence" value="ECO:0007669"/>
    <property type="project" value="Ensembl"/>
</dbReference>
<dbReference type="InterPro" id="IPR009728">
    <property type="entry name" value="BAALC"/>
</dbReference>
<dbReference type="PANTHER" id="PTHR14731">
    <property type="entry name" value="BRAIN AND ACUTE LEUKEMIA CYTOPLASMIC PROTEIN"/>
    <property type="match status" value="1"/>
</dbReference>
<dbReference type="PANTHER" id="PTHR14731:SF0">
    <property type="entry name" value="BRAIN AND ACUTE LEUKEMIA CYTOPLASMIC PROTEIN"/>
    <property type="match status" value="1"/>
</dbReference>
<dbReference type="Pfam" id="PF06989">
    <property type="entry name" value="BAALC_N"/>
    <property type="match status" value="1"/>
</dbReference>
<organism>
    <name type="scientific">Homo sapiens</name>
    <name type="common">Human</name>
    <dbReference type="NCBI Taxonomy" id="9606"/>
    <lineage>
        <taxon>Eukaryota</taxon>
        <taxon>Metazoa</taxon>
        <taxon>Chordata</taxon>
        <taxon>Craniata</taxon>
        <taxon>Vertebrata</taxon>
        <taxon>Euteleostomi</taxon>
        <taxon>Mammalia</taxon>
        <taxon>Eutheria</taxon>
        <taxon>Euarchontoglires</taxon>
        <taxon>Primates</taxon>
        <taxon>Haplorrhini</taxon>
        <taxon>Catarrhini</taxon>
        <taxon>Hominidae</taxon>
        <taxon>Homo</taxon>
    </lineage>
</organism>
<name>BAALC_HUMAN</name>
<gene>
    <name evidence="5" type="primary">BAALC</name>
</gene>